<protein>
    <recommendedName>
        <fullName evidence="1">UPF0294 protein YafD</fullName>
    </recommendedName>
</protein>
<accession>B4TYG5</accession>
<gene>
    <name evidence="1" type="primary">yafD</name>
    <name type="ordered locus">SeSA_A0288</name>
</gene>
<reference key="1">
    <citation type="journal article" date="2011" name="J. Bacteriol.">
        <title>Comparative genomics of 28 Salmonella enterica isolates: evidence for CRISPR-mediated adaptive sublineage evolution.</title>
        <authorList>
            <person name="Fricke W.F."/>
            <person name="Mammel M.K."/>
            <person name="McDermott P.F."/>
            <person name="Tartera C."/>
            <person name="White D.G."/>
            <person name="Leclerc J.E."/>
            <person name="Ravel J."/>
            <person name="Cebula T.A."/>
        </authorList>
    </citation>
    <scope>NUCLEOTIDE SEQUENCE [LARGE SCALE GENOMIC DNA]</scope>
    <source>
        <strain>CVM19633</strain>
    </source>
</reference>
<evidence type="ECO:0000255" key="1">
    <source>
        <dbReference type="HAMAP-Rule" id="MF_01119"/>
    </source>
</evidence>
<sequence length="266" mass="29904">MRKNTYAMRYVAGQPAERILPPGSFASIGQALPAGEPLSSEERIRILVWNIFKQQRAEWLSVLKNYGKDAHLVLLQEAQTTPELVQFATANYLAADQVPAFVLPQHPSGVMTLSAAHPVYCCPLREREPILRLAKSALVTVYPLPDTRLLMVVNVHAVNFSLGVDVYSKQLLPIGDQIAHHSGPVIMAGDFNAWSRPRMNALYRFAREMSLRQVRFTDDQRRRAFGRPLDFVFYRGLNVNEASVLVTRASDHNPLLVEFSPGKPEQ</sequence>
<name>YAFD_SALSV</name>
<feature type="chain" id="PRO_1000137251" description="UPF0294 protein YafD">
    <location>
        <begin position="1"/>
        <end position="266"/>
    </location>
</feature>
<keyword id="KW-0963">Cytoplasm</keyword>
<comment type="subcellular location">
    <subcellularLocation>
        <location evidence="1">Cytoplasm</location>
    </subcellularLocation>
</comment>
<comment type="similarity">
    <text evidence="1">Belongs to the UPF0294 family.</text>
</comment>
<proteinExistence type="inferred from homology"/>
<dbReference type="EMBL" id="CP001127">
    <property type="protein sequence ID" value="ACF88785.1"/>
    <property type="molecule type" value="Genomic_DNA"/>
</dbReference>
<dbReference type="RefSeq" id="WP_001230970.1">
    <property type="nucleotide sequence ID" value="NC_011094.1"/>
</dbReference>
<dbReference type="SMR" id="B4TYG5"/>
<dbReference type="KEGG" id="sew:SeSA_A0288"/>
<dbReference type="HOGENOM" id="CLU_083563_0_0_6"/>
<dbReference type="Proteomes" id="UP000001865">
    <property type="component" value="Chromosome"/>
</dbReference>
<dbReference type="GO" id="GO:0005737">
    <property type="term" value="C:cytoplasm"/>
    <property type="evidence" value="ECO:0007669"/>
    <property type="project" value="UniProtKB-SubCell"/>
</dbReference>
<dbReference type="GO" id="GO:0003824">
    <property type="term" value="F:catalytic activity"/>
    <property type="evidence" value="ECO:0007669"/>
    <property type="project" value="InterPro"/>
</dbReference>
<dbReference type="Gene3D" id="3.60.10.10">
    <property type="entry name" value="Endonuclease/exonuclease/phosphatase"/>
    <property type="match status" value="1"/>
</dbReference>
<dbReference type="HAMAP" id="MF_01119">
    <property type="entry name" value="UPF0294"/>
    <property type="match status" value="1"/>
</dbReference>
<dbReference type="InterPro" id="IPR036691">
    <property type="entry name" value="Endo/exonu/phosph_ase_sf"/>
</dbReference>
<dbReference type="InterPro" id="IPR005135">
    <property type="entry name" value="Endo/exonuclease/phosphatase"/>
</dbReference>
<dbReference type="InterPro" id="IPR022958">
    <property type="entry name" value="UPF0294"/>
</dbReference>
<dbReference type="NCBIfam" id="NF003839">
    <property type="entry name" value="PRK05421.1-1"/>
    <property type="match status" value="1"/>
</dbReference>
<dbReference type="NCBIfam" id="NF003840">
    <property type="entry name" value="PRK05421.1-2"/>
    <property type="match status" value="1"/>
</dbReference>
<dbReference type="NCBIfam" id="NF003841">
    <property type="entry name" value="PRK05421.1-3"/>
    <property type="match status" value="1"/>
</dbReference>
<dbReference type="NCBIfam" id="NF003842">
    <property type="entry name" value="PRK05421.1-4"/>
    <property type="match status" value="1"/>
</dbReference>
<dbReference type="Pfam" id="PF03372">
    <property type="entry name" value="Exo_endo_phos"/>
    <property type="match status" value="1"/>
</dbReference>
<dbReference type="SUPFAM" id="SSF56219">
    <property type="entry name" value="DNase I-like"/>
    <property type="match status" value="1"/>
</dbReference>
<organism>
    <name type="scientific">Salmonella schwarzengrund (strain CVM19633)</name>
    <dbReference type="NCBI Taxonomy" id="439843"/>
    <lineage>
        <taxon>Bacteria</taxon>
        <taxon>Pseudomonadati</taxon>
        <taxon>Pseudomonadota</taxon>
        <taxon>Gammaproteobacteria</taxon>
        <taxon>Enterobacterales</taxon>
        <taxon>Enterobacteriaceae</taxon>
        <taxon>Salmonella</taxon>
    </lineage>
</organism>